<evidence type="ECO:0000250" key="1"/>
<evidence type="ECO:0000305" key="2"/>
<protein>
    <recommendedName>
        <fullName>Probable histone-binding protein rbbD</fullName>
    </recommendedName>
</protein>
<name>RBBD_DICDI</name>
<comment type="function">
    <text evidence="1">Core histone-binding subunit that may target chromatin assembly factors, chromatin remodeling factors and histone deacetylases to their histone substrates in a manner that is regulated by nucleosomal DNA. Component of several complexes which regulate chromatin metabolism (By similarity).</text>
</comment>
<comment type="subunit">
    <text evidence="1">Probably binds directly to helix 1 of the histone fold of histone H4, a region that is not accessible when H4 is in chromatin.</text>
</comment>
<comment type="subcellular location">
    <subcellularLocation>
        <location evidence="1">Nucleus</location>
    </subcellularLocation>
</comment>
<comment type="similarity">
    <text evidence="2">Belongs to the WD repeat RBAP46/RBAP48/MSI1 family.</text>
</comment>
<proteinExistence type="inferred from homology"/>
<dbReference type="EMBL" id="AAFI02000047">
    <property type="protein sequence ID" value="EAL66124.1"/>
    <property type="molecule type" value="Genomic_DNA"/>
</dbReference>
<dbReference type="RefSeq" id="XP_640105.1">
    <property type="nucleotide sequence ID" value="XM_635013.1"/>
</dbReference>
<dbReference type="SMR" id="Q54SD4"/>
<dbReference type="FunCoup" id="Q54SD4">
    <property type="interactions" value="1456"/>
</dbReference>
<dbReference type="STRING" id="44689.Q54SD4"/>
<dbReference type="GlyGen" id="Q54SD4">
    <property type="glycosylation" value="1 site"/>
</dbReference>
<dbReference type="PaxDb" id="44689-DDB0232003"/>
<dbReference type="EnsemblProtists" id="EAL66124">
    <property type="protein sequence ID" value="EAL66124"/>
    <property type="gene ID" value="DDB_G0282529"/>
</dbReference>
<dbReference type="GeneID" id="8623636"/>
<dbReference type="KEGG" id="ddi:DDB_G0282529"/>
<dbReference type="dictyBase" id="DDB_G0282529">
    <property type="gene designation" value="rbbD"/>
</dbReference>
<dbReference type="VEuPathDB" id="AmoebaDB:DDB_G0282529"/>
<dbReference type="eggNOG" id="KOG0264">
    <property type="taxonomic scope" value="Eukaryota"/>
</dbReference>
<dbReference type="HOGENOM" id="CLU_020445_3_1_1"/>
<dbReference type="InParanoid" id="Q54SD4"/>
<dbReference type="OMA" id="PHEEGCL"/>
<dbReference type="PhylomeDB" id="Q54SD4"/>
<dbReference type="Reactome" id="R-DDI-3214815">
    <property type="pathway name" value="HDACs deacetylate histones"/>
</dbReference>
<dbReference type="Reactome" id="R-DDI-3214847">
    <property type="pathway name" value="HATs acetylate histones"/>
</dbReference>
<dbReference type="Reactome" id="R-DDI-3214858">
    <property type="pathway name" value="RMTs methylate histone arginines"/>
</dbReference>
<dbReference type="Reactome" id="R-DDI-8951664">
    <property type="pathway name" value="Neddylation"/>
</dbReference>
<dbReference type="PRO" id="PR:Q54SD4"/>
<dbReference type="Proteomes" id="UP000002195">
    <property type="component" value="Chromosome 3"/>
</dbReference>
<dbReference type="GO" id="GO:0005634">
    <property type="term" value="C:nucleus"/>
    <property type="evidence" value="ECO:0000318"/>
    <property type="project" value="GO_Central"/>
</dbReference>
<dbReference type="GO" id="GO:0042393">
    <property type="term" value="F:histone binding"/>
    <property type="evidence" value="ECO:0000318"/>
    <property type="project" value="GO_Central"/>
</dbReference>
<dbReference type="GO" id="GO:0006338">
    <property type="term" value="P:chromatin remodeling"/>
    <property type="evidence" value="ECO:0000318"/>
    <property type="project" value="GO_Central"/>
</dbReference>
<dbReference type="GO" id="GO:0006260">
    <property type="term" value="P:DNA replication"/>
    <property type="evidence" value="ECO:0007669"/>
    <property type="project" value="UniProtKB-KW"/>
</dbReference>
<dbReference type="GO" id="GO:0006355">
    <property type="term" value="P:regulation of DNA-templated transcription"/>
    <property type="evidence" value="ECO:0000318"/>
    <property type="project" value="GO_Central"/>
</dbReference>
<dbReference type="GO" id="GO:0046689">
    <property type="term" value="P:response to mercury ion"/>
    <property type="evidence" value="ECO:0000314"/>
    <property type="project" value="dictyBase"/>
</dbReference>
<dbReference type="FunFam" id="2.130.10.10:FF:000512">
    <property type="entry name" value="WD-40 repeat-containing protein MSI1"/>
    <property type="match status" value="1"/>
</dbReference>
<dbReference type="Gene3D" id="2.130.10.10">
    <property type="entry name" value="YVTN repeat-like/Quinoprotein amine dehydrogenase"/>
    <property type="match status" value="1"/>
</dbReference>
<dbReference type="InterPro" id="IPR020472">
    <property type="entry name" value="G-protein_beta_WD-40_rep"/>
</dbReference>
<dbReference type="InterPro" id="IPR022052">
    <property type="entry name" value="Histone-bd_RBBP4-like_N"/>
</dbReference>
<dbReference type="InterPro" id="IPR015943">
    <property type="entry name" value="WD40/YVTN_repeat-like_dom_sf"/>
</dbReference>
<dbReference type="InterPro" id="IPR019775">
    <property type="entry name" value="WD40_repeat_CS"/>
</dbReference>
<dbReference type="InterPro" id="IPR036322">
    <property type="entry name" value="WD40_repeat_dom_sf"/>
</dbReference>
<dbReference type="InterPro" id="IPR001680">
    <property type="entry name" value="WD40_rpt"/>
</dbReference>
<dbReference type="InterPro" id="IPR050459">
    <property type="entry name" value="WD_repeat_RBAP46/RBAP48/MSI1"/>
</dbReference>
<dbReference type="PANTHER" id="PTHR22850">
    <property type="entry name" value="WD40 REPEAT FAMILY"/>
    <property type="match status" value="1"/>
</dbReference>
<dbReference type="Pfam" id="PF12265">
    <property type="entry name" value="CAF1C_H4-bd"/>
    <property type="match status" value="1"/>
</dbReference>
<dbReference type="Pfam" id="PF00400">
    <property type="entry name" value="WD40"/>
    <property type="match status" value="5"/>
</dbReference>
<dbReference type="PRINTS" id="PR00320">
    <property type="entry name" value="GPROTEINBRPT"/>
</dbReference>
<dbReference type="SMART" id="SM00320">
    <property type="entry name" value="WD40"/>
    <property type="match status" value="6"/>
</dbReference>
<dbReference type="SUPFAM" id="SSF50978">
    <property type="entry name" value="WD40 repeat-like"/>
    <property type="match status" value="1"/>
</dbReference>
<dbReference type="PROSITE" id="PS00678">
    <property type="entry name" value="WD_REPEATS_1"/>
    <property type="match status" value="3"/>
</dbReference>
<dbReference type="PROSITE" id="PS50082">
    <property type="entry name" value="WD_REPEATS_2"/>
    <property type="match status" value="5"/>
</dbReference>
<dbReference type="PROSITE" id="PS50294">
    <property type="entry name" value="WD_REPEATS_REGION"/>
    <property type="match status" value="1"/>
</dbReference>
<accession>Q54SD4</accession>
<keyword id="KW-0156">Chromatin regulator</keyword>
<keyword id="KW-0235">DNA replication</keyword>
<keyword id="KW-0539">Nucleus</keyword>
<keyword id="KW-1185">Reference proteome</keyword>
<keyword id="KW-0677">Repeat</keyword>
<keyword id="KW-0678">Repressor</keyword>
<keyword id="KW-0804">Transcription</keyword>
<keyword id="KW-0805">Transcription regulation</keyword>
<keyword id="KW-0853">WD repeat</keyword>
<gene>
    <name type="primary">rbbD</name>
    <name type="ORF">DDB_G0282529</name>
</gene>
<sequence length="423" mass="47731">MTTQMEDVEEKVINEEYKIWKRHTPFLYDMVITHALEWPSLTVAWLPVKTSQPNKPYSIEKVILGTHTSDEEQNYLMVAKVHLPVDEASIESLKYDDTKGEVGGIGNVSEKIEIIQKINHEGEVNRARVMPQNHSIIATKTVSSEVYIFDTTKHPLEPTPDGKCSPNLKLTGHKKEGYGISWNPRKEGHLLSCSDDQSICMWDISAASKSDSTLDALNIYNGHTSIVEDVAWHYIHDTFFGSVGDDKKLMIWDTRTGTKPIHVVEAHNSEVNCLSFNPFCEFLVATGSTDKTVALWDMRNLGNRLHSLISHTDEVFQVQFSPHNETVLASCGSDRRVNVWDLSRIGEEQNNEDAADGPPELLFIHGGHTSKISDFSWNPNDPWSIASVAEDNILQIWQMAENIYNDREDDLENSKVTNAQIGE</sequence>
<feature type="chain" id="PRO_0000328136" description="Probable histone-binding protein rbbD">
    <location>
        <begin position="1"/>
        <end position="423"/>
    </location>
</feature>
<feature type="repeat" description="WD 1">
    <location>
        <begin position="119"/>
        <end position="159"/>
    </location>
</feature>
<feature type="repeat" description="WD 2">
    <location>
        <begin position="172"/>
        <end position="212"/>
    </location>
</feature>
<feature type="repeat" description="WD 3">
    <location>
        <begin position="222"/>
        <end position="262"/>
    </location>
</feature>
<feature type="repeat" description="WD 4">
    <location>
        <begin position="266"/>
        <end position="306"/>
    </location>
</feature>
<feature type="repeat" description="WD 5">
    <location>
        <begin position="310"/>
        <end position="350"/>
    </location>
</feature>
<feature type="repeat" description="WD 6">
    <location>
        <begin position="367"/>
        <end position="407"/>
    </location>
</feature>
<reference key="1">
    <citation type="journal article" date="2005" name="Nature">
        <title>The genome of the social amoeba Dictyostelium discoideum.</title>
        <authorList>
            <person name="Eichinger L."/>
            <person name="Pachebat J.A."/>
            <person name="Gloeckner G."/>
            <person name="Rajandream M.A."/>
            <person name="Sucgang R."/>
            <person name="Berriman M."/>
            <person name="Song J."/>
            <person name="Olsen R."/>
            <person name="Szafranski K."/>
            <person name="Xu Q."/>
            <person name="Tunggal B."/>
            <person name="Kummerfeld S."/>
            <person name="Madera M."/>
            <person name="Konfortov B.A."/>
            <person name="Rivero F."/>
            <person name="Bankier A.T."/>
            <person name="Lehmann R."/>
            <person name="Hamlin N."/>
            <person name="Davies R."/>
            <person name="Gaudet P."/>
            <person name="Fey P."/>
            <person name="Pilcher K."/>
            <person name="Chen G."/>
            <person name="Saunders D."/>
            <person name="Sodergren E.J."/>
            <person name="Davis P."/>
            <person name="Kerhornou A."/>
            <person name="Nie X."/>
            <person name="Hall N."/>
            <person name="Anjard C."/>
            <person name="Hemphill L."/>
            <person name="Bason N."/>
            <person name="Farbrother P."/>
            <person name="Desany B."/>
            <person name="Just E."/>
            <person name="Morio T."/>
            <person name="Rost R."/>
            <person name="Churcher C.M."/>
            <person name="Cooper J."/>
            <person name="Haydock S."/>
            <person name="van Driessche N."/>
            <person name="Cronin A."/>
            <person name="Goodhead I."/>
            <person name="Muzny D.M."/>
            <person name="Mourier T."/>
            <person name="Pain A."/>
            <person name="Lu M."/>
            <person name="Harper D."/>
            <person name="Lindsay R."/>
            <person name="Hauser H."/>
            <person name="James K.D."/>
            <person name="Quiles M."/>
            <person name="Madan Babu M."/>
            <person name="Saito T."/>
            <person name="Buchrieser C."/>
            <person name="Wardroper A."/>
            <person name="Felder M."/>
            <person name="Thangavelu M."/>
            <person name="Johnson D."/>
            <person name="Knights A."/>
            <person name="Loulseged H."/>
            <person name="Mungall K.L."/>
            <person name="Oliver K."/>
            <person name="Price C."/>
            <person name="Quail M.A."/>
            <person name="Urushihara H."/>
            <person name="Hernandez J."/>
            <person name="Rabbinowitsch E."/>
            <person name="Steffen D."/>
            <person name="Sanders M."/>
            <person name="Ma J."/>
            <person name="Kohara Y."/>
            <person name="Sharp S."/>
            <person name="Simmonds M.N."/>
            <person name="Spiegler S."/>
            <person name="Tivey A."/>
            <person name="Sugano S."/>
            <person name="White B."/>
            <person name="Walker D."/>
            <person name="Woodward J.R."/>
            <person name="Winckler T."/>
            <person name="Tanaka Y."/>
            <person name="Shaulsky G."/>
            <person name="Schleicher M."/>
            <person name="Weinstock G.M."/>
            <person name="Rosenthal A."/>
            <person name="Cox E.C."/>
            <person name="Chisholm R.L."/>
            <person name="Gibbs R.A."/>
            <person name="Loomis W.F."/>
            <person name="Platzer M."/>
            <person name="Kay R.R."/>
            <person name="Williams J.G."/>
            <person name="Dear P.H."/>
            <person name="Noegel A.A."/>
            <person name="Barrell B.G."/>
            <person name="Kuspa A."/>
        </authorList>
    </citation>
    <scope>NUCLEOTIDE SEQUENCE [LARGE SCALE GENOMIC DNA]</scope>
    <source>
        <strain>AX4</strain>
    </source>
</reference>
<organism>
    <name type="scientific">Dictyostelium discoideum</name>
    <name type="common">Social amoeba</name>
    <dbReference type="NCBI Taxonomy" id="44689"/>
    <lineage>
        <taxon>Eukaryota</taxon>
        <taxon>Amoebozoa</taxon>
        <taxon>Evosea</taxon>
        <taxon>Eumycetozoa</taxon>
        <taxon>Dictyostelia</taxon>
        <taxon>Dictyosteliales</taxon>
        <taxon>Dictyosteliaceae</taxon>
        <taxon>Dictyostelium</taxon>
    </lineage>
</organism>